<evidence type="ECO:0000250" key="1"/>
<evidence type="ECO:0000255" key="2">
    <source>
        <dbReference type="PROSITE-ProRule" id="PRU00366"/>
    </source>
</evidence>
<evidence type="ECO:0000269" key="3">
    <source>
    </source>
</evidence>
<evidence type="ECO:0000305" key="4"/>
<reference key="1">
    <citation type="journal article" date="2001" name="Plant Cell">
        <title>Repression domains of class II ERF transcriptional repressors share an essential motif for active repression.</title>
        <authorList>
            <person name="Ohta M."/>
            <person name="Matsui K."/>
            <person name="Hiratsu K."/>
            <person name="Shinshi H."/>
            <person name="Ohme-Takagi M."/>
        </authorList>
    </citation>
    <scope>NUCLEOTIDE SEQUENCE [GENOMIC DNA]</scope>
    <scope>FUNCTION</scope>
    <scope>DOMAIN</scope>
</reference>
<reference key="2">
    <citation type="submission" date="2004-02" db="EMBL/GenBank/DDBJ databases">
        <title>Molecular cloning, expression, phylogenetic and functional characterization of the Arabidopsis AP2/EREBP transcription factor family.</title>
        <authorList>
            <person name="Pan Y."/>
            <person name="Gong W."/>
            <person name="Liu D."/>
            <person name="Fu Q."/>
            <person name="Mei W.-Q."/>
            <person name="Song W.-Q."/>
            <person name="Ma L.-G."/>
            <person name="Luo J.-C."/>
            <person name="Deng X.-W."/>
            <person name="Zhu Y.-X."/>
        </authorList>
    </citation>
    <scope>NUCLEOTIDE SEQUENCE [MRNA]</scope>
</reference>
<reference key="3">
    <citation type="journal article" date="2000" name="Nature">
        <title>Sequence and analysis of chromosome 1 of the plant Arabidopsis thaliana.</title>
        <authorList>
            <person name="Theologis A."/>
            <person name="Ecker J.R."/>
            <person name="Palm C.J."/>
            <person name="Federspiel N.A."/>
            <person name="Kaul S."/>
            <person name="White O."/>
            <person name="Alonso J."/>
            <person name="Altafi H."/>
            <person name="Araujo R."/>
            <person name="Bowman C.L."/>
            <person name="Brooks S.Y."/>
            <person name="Buehler E."/>
            <person name="Chan A."/>
            <person name="Chao Q."/>
            <person name="Chen H."/>
            <person name="Cheuk R.F."/>
            <person name="Chin C.W."/>
            <person name="Chung M.K."/>
            <person name="Conn L."/>
            <person name="Conway A.B."/>
            <person name="Conway A.R."/>
            <person name="Creasy T.H."/>
            <person name="Dewar K."/>
            <person name="Dunn P."/>
            <person name="Etgu P."/>
            <person name="Feldblyum T.V."/>
            <person name="Feng J.-D."/>
            <person name="Fong B."/>
            <person name="Fujii C.Y."/>
            <person name="Gill J.E."/>
            <person name="Goldsmith A.D."/>
            <person name="Haas B."/>
            <person name="Hansen N.F."/>
            <person name="Hughes B."/>
            <person name="Huizar L."/>
            <person name="Hunter J.L."/>
            <person name="Jenkins J."/>
            <person name="Johnson-Hopson C."/>
            <person name="Khan S."/>
            <person name="Khaykin E."/>
            <person name="Kim C.J."/>
            <person name="Koo H.L."/>
            <person name="Kremenetskaia I."/>
            <person name="Kurtz D.B."/>
            <person name="Kwan A."/>
            <person name="Lam B."/>
            <person name="Langin-Hooper S."/>
            <person name="Lee A."/>
            <person name="Lee J.M."/>
            <person name="Lenz C.A."/>
            <person name="Li J.H."/>
            <person name="Li Y.-P."/>
            <person name="Lin X."/>
            <person name="Liu S.X."/>
            <person name="Liu Z.A."/>
            <person name="Luros J.S."/>
            <person name="Maiti R."/>
            <person name="Marziali A."/>
            <person name="Militscher J."/>
            <person name="Miranda M."/>
            <person name="Nguyen M."/>
            <person name="Nierman W.C."/>
            <person name="Osborne B.I."/>
            <person name="Pai G."/>
            <person name="Peterson J."/>
            <person name="Pham P.K."/>
            <person name="Rizzo M."/>
            <person name="Rooney T."/>
            <person name="Rowley D."/>
            <person name="Sakano H."/>
            <person name="Salzberg S.L."/>
            <person name="Schwartz J.R."/>
            <person name="Shinn P."/>
            <person name="Southwick A.M."/>
            <person name="Sun H."/>
            <person name="Tallon L.J."/>
            <person name="Tambunga G."/>
            <person name="Toriumi M.J."/>
            <person name="Town C.D."/>
            <person name="Utterback T."/>
            <person name="Van Aken S."/>
            <person name="Vaysberg M."/>
            <person name="Vysotskaia V.S."/>
            <person name="Walker M."/>
            <person name="Wu D."/>
            <person name="Yu G."/>
            <person name="Fraser C.M."/>
            <person name="Venter J.C."/>
            <person name="Davis R.W."/>
        </authorList>
    </citation>
    <scope>NUCLEOTIDE SEQUENCE [LARGE SCALE GENOMIC DNA]</scope>
    <source>
        <strain>cv. Columbia</strain>
    </source>
</reference>
<reference key="4">
    <citation type="journal article" date="2017" name="Plant J.">
        <title>Araport11: a complete reannotation of the Arabidopsis thaliana reference genome.</title>
        <authorList>
            <person name="Cheng C.Y."/>
            <person name="Krishnakumar V."/>
            <person name="Chan A.P."/>
            <person name="Thibaud-Nissen F."/>
            <person name="Schobel S."/>
            <person name="Town C.D."/>
        </authorList>
    </citation>
    <scope>GENOME REANNOTATION</scope>
    <source>
        <strain>cv. Columbia</strain>
    </source>
</reference>
<reference key="5">
    <citation type="journal article" date="2006" name="Plant Physiol.">
        <title>Genome-wide analysis of the ERF gene family in Arabidopsis and rice.</title>
        <authorList>
            <person name="Nakano T."/>
            <person name="Suzuki K."/>
            <person name="Fujimura T."/>
            <person name="Shinshi H."/>
        </authorList>
    </citation>
    <scope>GENE FAMILY</scope>
    <scope>NOMENCLATURE</scope>
</reference>
<organism>
    <name type="scientific">Arabidopsis thaliana</name>
    <name type="common">Mouse-ear cress</name>
    <dbReference type="NCBI Taxonomy" id="3702"/>
    <lineage>
        <taxon>Eukaryota</taxon>
        <taxon>Viridiplantae</taxon>
        <taxon>Streptophyta</taxon>
        <taxon>Embryophyta</taxon>
        <taxon>Tracheophyta</taxon>
        <taxon>Spermatophyta</taxon>
        <taxon>Magnoliopsida</taxon>
        <taxon>eudicotyledons</taxon>
        <taxon>Gunneridae</taxon>
        <taxon>Pentapetalae</taxon>
        <taxon>rosids</taxon>
        <taxon>malvids</taxon>
        <taxon>Brassicales</taxon>
        <taxon>Brassicaceae</taxon>
        <taxon>Camelineae</taxon>
        <taxon>Arabidopsis</taxon>
    </lineage>
</organism>
<sequence>MTTEKENVTTAVAVKDGGEKSKEVSDKGVKKRKNVTKALAVNDGGEKSKEVRYRGVRRRPWGRYAAEIRDPVKKKRVWLGSFNTGEEAARAYDSAAIRFRGSKATTNFPLIGYYGISSATPVNNNLSETVSDGNANLPLVGDDGNALASPVNNTLSETARDGTLPSDCHDMLSPGVAEAVAGFFLDLPEVIALKEELDRVCPDQFESIDMGLTIGPQTAVEEPETSSAVDCKLRMEPDLDLNASP</sequence>
<comment type="function">
    <text evidence="1 3">Involved in the regulation of gene expression by stress factors and by components of stress signal transduction pathways. Transcription factor that binds to the GCC-box pathogenesis-related promoter element. Acts as a transcriptional inhibitor and may regulate other AtERFs (By similarity).</text>
</comment>
<comment type="interaction">
    <interactant intactId="EBI-15198075">
        <id>Q9ZWA2</id>
    </interactant>
    <interactant intactId="EBI-4426144">
        <id>Q9C9L2</id>
        <label>TCP15</label>
    </interactant>
    <organismsDiffer>false</organismsDiffer>
    <experiments>3</experiments>
</comment>
<comment type="subcellular location">
    <subcellularLocation>
        <location evidence="4">Nucleus</location>
    </subcellularLocation>
</comment>
<comment type="domain">
    <text evidence="1">Contains a slightly degenerated ERF-associated amphiphilic repression (EAR) motif, which may be involved in the activity of transcriptional repression.</text>
</comment>
<comment type="similarity">
    <text evidence="4">Belongs to the AP2/ERF transcription factor family. ERF subfamily.</text>
</comment>
<name>ERF77_ARATH</name>
<keyword id="KW-0238">DNA-binding</keyword>
<keyword id="KW-0936">Ethylene signaling pathway</keyword>
<keyword id="KW-0539">Nucleus</keyword>
<keyword id="KW-1185">Reference proteome</keyword>
<keyword id="KW-0678">Repressor</keyword>
<keyword id="KW-0804">Transcription</keyword>
<keyword id="KW-0805">Transcription regulation</keyword>
<proteinExistence type="evidence at protein level"/>
<gene>
    <name type="primary">ERF10</name>
    <name type="synonym">ERF-10</name>
    <name type="synonym">ERF077</name>
    <name type="ordered locus">At1g03800</name>
    <name type="ORF">F21M11.27</name>
</gene>
<dbReference type="EMBL" id="AB047649">
    <property type="protein sequence ID" value="BAB18561.1"/>
    <property type="molecule type" value="Genomic_DNA"/>
</dbReference>
<dbReference type="EMBL" id="AY560879">
    <property type="protein sequence ID" value="AAT44946.1"/>
    <property type="molecule type" value="mRNA"/>
</dbReference>
<dbReference type="EMBL" id="AC003027">
    <property type="protein sequence ID" value="AAD10688.1"/>
    <property type="molecule type" value="Genomic_DNA"/>
</dbReference>
<dbReference type="EMBL" id="CP002684">
    <property type="protein sequence ID" value="AEE27615.1"/>
    <property type="molecule type" value="Genomic_DNA"/>
</dbReference>
<dbReference type="PIR" id="E86168">
    <property type="entry name" value="E86168"/>
</dbReference>
<dbReference type="RefSeq" id="NP_171876.1">
    <property type="nucleotide sequence ID" value="NM_100259.2"/>
</dbReference>
<dbReference type="SMR" id="Q9ZWA2"/>
<dbReference type="BioGRID" id="24409">
    <property type="interactions" value="56"/>
</dbReference>
<dbReference type="IntAct" id="Q9ZWA2">
    <property type="interactions" value="53"/>
</dbReference>
<dbReference type="STRING" id="3702.Q9ZWA2"/>
<dbReference type="iPTMnet" id="Q9ZWA2"/>
<dbReference type="PaxDb" id="3702-AT1G03800.1"/>
<dbReference type="ProteomicsDB" id="220685"/>
<dbReference type="EnsemblPlants" id="AT1G03800.1">
    <property type="protein sequence ID" value="AT1G03800.1"/>
    <property type="gene ID" value="AT1G03800"/>
</dbReference>
<dbReference type="GeneID" id="839173"/>
<dbReference type="Gramene" id="AT1G03800.1">
    <property type="protein sequence ID" value="AT1G03800.1"/>
    <property type="gene ID" value="AT1G03800"/>
</dbReference>
<dbReference type="KEGG" id="ath:AT1G03800"/>
<dbReference type="Araport" id="AT1G03800"/>
<dbReference type="TAIR" id="AT1G03800">
    <property type="gene designation" value="ERF10"/>
</dbReference>
<dbReference type="eggNOG" id="ENOG502RZGB">
    <property type="taxonomic scope" value="Eukaryota"/>
</dbReference>
<dbReference type="HOGENOM" id="CLU_042594_5_1_1"/>
<dbReference type="InParanoid" id="Q9ZWA2"/>
<dbReference type="OMA" id="ANWNNDS"/>
<dbReference type="PhylomeDB" id="Q9ZWA2"/>
<dbReference type="PRO" id="PR:Q9ZWA2"/>
<dbReference type="Proteomes" id="UP000006548">
    <property type="component" value="Chromosome 1"/>
</dbReference>
<dbReference type="ExpressionAtlas" id="Q9ZWA2">
    <property type="expression patterns" value="baseline and differential"/>
</dbReference>
<dbReference type="GO" id="GO:0005634">
    <property type="term" value="C:nucleus"/>
    <property type="evidence" value="ECO:0007669"/>
    <property type="project" value="UniProtKB-SubCell"/>
</dbReference>
<dbReference type="GO" id="GO:0003700">
    <property type="term" value="F:DNA-binding transcription factor activity"/>
    <property type="evidence" value="ECO:0000250"/>
    <property type="project" value="TAIR"/>
</dbReference>
<dbReference type="GO" id="GO:0000976">
    <property type="term" value="F:transcription cis-regulatory region binding"/>
    <property type="evidence" value="ECO:0000353"/>
    <property type="project" value="TAIR"/>
</dbReference>
<dbReference type="GO" id="GO:0009873">
    <property type="term" value="P:ethylene-activated signaling pathway"/>
    <property type="evidence" value="ECO:0000304"/>
    <property type="project" value="TAIR"/>
</dbReference>
<dbReference type="CDD" id="cd00018">
    <property type="entry name" value="AP2"/>
    <property type="match status" value="1"/>
</dbReference>
<dbReference type="FunFam" id="3.30.730.10:FF:000001">
    <property type="entry name" value="Ethylene-responsive transcription factor 2"/>
    <property type="match status" value="1"/>
</dbReference>
<dbReference type="Gene3D" id="3.30.730.10">
    <property type="entry name" value="AP2/ERF domain"/>
    <property type="match status" value="1"/>
</dbReference>
<dbReference type="InterPro" id="IPR001471">
    <property type="entry name" value="AP2/ERF_dom"/>
</dbReference>
<dbReference type="InterPro" id="IPR036955">
    <property type="entry name" value="AP2/ERF_dom_sf"/>
</dbReference>
<dbReference type="InterPro" id="IPR016177">
    <property type="entry name" value="DNA-bd_dom_sf"/>
</dbReference>
<dbReference type="PANTHER" id="PTHR31677">
    <property type="entry name" value="AP2 DOMAIN CLASS TRANSCRIPTION FACTOR"/>
    <property type="match status" value="1"/>
</dbReference>
<dbReference type="PANTHER" id="PTHR31677:SF228">
    <property type="entry name" value="ETHYLENE-RESPONSIVE TRANSCRIPTION FACTOR 10-RELATED"/>
    <property type="match status" value="1"/>
</dbReference>
<dbReference type="Pfam" id="PF00847">
    <property type="entry name" value="AP2"/>
    <property type="match status" value="1"/>
</dbReference>
<dbReference type="PRINTS" id="PR00367">
    <property type="entry name" value="ETHRSPELEMNT"/>
</dbReference>
<dbReference type="SMART" id="SM00380">
    <property type="entry name" value="AP2"/>
    <property type="match status" value="1"/>
</dbReference>
<dbReference type="SUPFAM" id="SSF54171">
    <property type="entry name" value="DNA-binding domain"/>
    <property type="match status" value="1"/>
</dbReference>
<dbReference type="PROSITE" id="PS51032">
    <property type="entry name" value="AP2_ERF"/>
    <property type="match status" value="1"/>
</dbReference>
<feature type="chain" id="PRO_0000112560" description="Ethylene-responsive transcription factor 10">
    <location>
        <begin position="1"/>
        <end position="245"/>
    </location>
</feature>
<feature type="DNA-binding region" description="AP2/ERF" evidence="2">
    <location>
        <begin position="52"/>
        <end position="109"/>
    </location>
</feature>
<feature type="short sequence motif" description="EAR-like (transcriptional repression)">
    <location>
        <begin position="239"/>
        <end position="245"/>
    </location>
</feature>
<accession>Q9ZWA2</accession>
<protein>
    <recommendedName>
        <fullName>Ethylene-responsive transcription factor 10</fullName>
        <shortName>AtERF10</shortName>
    </recommendedName>
    <alternativeName>
        <fullName>Ethylene-responsive element-binding factor 10</fullName>
        <shortName>EREBP-10</shortName>
    </alternativeName>
</protein>